<reference key="1">
    <citation type="journal article" date="2000" name="Nucleic Acids Res.">
        <title>Two novel human and mouse DNA polymerases of the polX family.</title>
        <authorList>
            <person name="Aoufouchi S."/>
            <person name="Flatter E."/>
            <person name="Dahan A."/>
            <person name="Faili A."/>
            <person name="Bertocci B."/>
            <person name="Storck S."/>
            <person name="Delbos F."/>
            <person name="Cocea L."/>
            <person name="Gupta N."/>
            <person name="Weill J.-C."/>
            <person name="Reynaud C.-A."/>
        </authorList>
    </citation>
    <scope>NUCLEOTIDE SEQUENCE [MRNA]</scope>
</reference>
<reference key="2">
    <citation type="journal article" date="2000" name="EMBO J.">
        <title>DNA polymerase mu (Pol mu), homologous to TdT, could act as a DNA mutator in eukaryotic cells.</title>
        <authorList>
            <person name="Dominguez O."/>
            <person name="Ruiz J.F."/>
            <person name="Lain de Lera T."/>
            <person name="Garcia-Diaz M."/>
            <person name="Gonzalez M.A."/>
            <person name="Kirchhoff T."/>
            <person name="Martinez-A C."/>
            <person name="Bernad A."/>
            <person name="Blanco L."/>
        </authorList>
    </citation>
    <scope>NUCLEOTIDE SEQUENCE [MRNA]</scope>
    <source>
        <strain>CD-1</strain>
    </source>
</reference>
<reference key="3">
    <citation type="journal article" date="2009" name="PLoS Biol.">
        <title>Lineage-specific biology revealed by a finished genome assembly of the mouse.</title>
        <authorList>
            <person name="Church D.M."/>
            <person name="Goodstadt L."/>
            <person name="Hillier L.W."/>
            <person name="Zody M.C."/>
            <person name="Goldstein S."/>
            <person name="She X."/>
            <person name="Bult C.J."/>
            <person name="Agarwala R."/>
            <person name="Cherry J.L."/>
            <person name="DiCuccio M."/>
            <person name="Hlavina W."/>
            <person name="Kapustin Y."/>
            <person name="Meric P."/>
            <person name="Maglott D."/>
            <person name="Birtle Z."/>
            <person name="Marques A.C."/>
            <person name="Graves T."/>
            <person name="Zhou S."/>
            <person name="Teague B."/>
            <person name="Potamousis K."/>
            <person name="Churas C."/>
            <person name="Place M."/>
            <person name="Herschleb J."/>
            <person name="Runnheim R."/>
            <person name="Forrest D."/>
            <person name="Amos-Landgraf J."/>
            <person name="Schwartz D.C."/>
            <person name="Cheng Z."/>
            <person name="Lindblad-Toh K."/>
            <person name="Eichler E.E."/>
            <person name="Ponting C.P."/>
        </authorList>
    </citation>
    <scope>NUCLEOTIDE SEQUENCE [LARGE SCALE GENOMIC DNA]</scope>
    <source>
        <strain>C57BL/6J</strain>
    </source>
</reference>
<reference key="4">
    <citation type="submission" date="2005-07" db="EMBL/GenBank/DDBJ databases">
        <authorList>
            <person name="Mural R.J."/>
            <person name="Adams M.D."/>
            <person name="Myers E.W."/>
            <person name="Smith H.O."/>
            <person name="Venter J.C."/>
        </authorList>
    </citation>
    <scope>NUCLEOTIDE SEQUENCE [LARGE SCALE GENOMIC DNA]</scope>
</reference>
<reference key="5">
    <citation type="journal article" date="2006" name="Immunity">
        <title>Nonoverlapping functions of DNA polymerases mu, lambda, and terminal deoxynucleotidyltransferase during immunoglobulin V(D)J recombination in vivo.</title>
        <authorList>
            <person name="Bertocci B."/>
            <person name="De Smet A."/>
            <person name="Weill J.C."/>
            <person name="Reynaud C.A."/>
        </authorList>
    </citation>
    <scope>FUNCTION</scope>
</reference>
<reference key="6">
    <citation type="journal article" date="2007" name="Nucleic Acids Res.">
        <title>Involvement of DNA polymerase mu in the repair of a specific subset of DNA double-strand breaks in mammalian cells.</title>
        <authorList>
            <person name="Capp J.P."/>
            <person name="Boudsocq F."/>
            <person name="Besnard A.G."/>
            <person name="Lopez B.S."/>
            <person name="Cazaux C."/>
            <person name="Hoffmann J.S."/>
            <person name="Canitrot Y."/>
        </authorList>
    </citation>
    <scope>FUNCTION</scope>
</reference>
<reference key="7">
    <citation type="journal article" date="2010" name="Cell">
        <title>A tissue-specific atlas of mouse protein phosphorylation and expression.</title>
        <authorList>
            <person name="Huttlin E.L."/>
            <person name="Jedrychowski M.P."/>
            <person name="Elias J.E."/>
            <person name="Goswami T."/>
            <person name="Rad R."/>
            <person name="Beausoleil S.A."/>
            <person name="Villen J."/>
            <person name="Haas W."/>
            <person name="Sowa M.E."/>
            <person name="Gygi S.P."/>
        </authorList>
    </citation>
    <scope>PHOSPHORYLATION [LARGE SCALE ANALYSIS] AT SER-12</scope>
    <scope>IDENTIFICATION BY MASS SPECTROMETRY [LARGE SCALE ANALYSIS]</scope>
    <source>
        <tissue>Spleen</tissue>
    </source>
</reference>
<reference key="8">
    <citation type="journal article" date="2007" name="Nat. Struct. Mol. Biol.">
        <title>Structural insight into the substrate specificity of DNA Polymerase mu.</title>
        <authorList>
            <person name="Moon A.F."/>
            <person name="Garcia-Diaz M."/>
            <person name="Bebenek K."/>
            <person name="Davis B.J."/>
            <person name="Zhong X."/>
            <person name="Ramsden D.A."/>
            <person name="Kunkel T.A."/>
            <person name="Pedersen L.C."/>
        </authorList>
    </citation>
    <scope>X-RAY CRYSTALLOGRAPHY (2.4 ANGSTROMS) OF 137-496 IN COMPLEX WITH DNA</scope>
    <scope>MAGNESIUM-BINDING SITES</scope>
    <scope>COFACTOR</scope>
</reference>
<organism>
    <name type="scientific">Mus musculus</name>
    <name type="common">Mouse</name>
    <dbReference type="NCBI Taxonomy" id="10090"/>
    <lineage>
        <taxon>Eukaryota</taxon>
        <taxon>Metazoa</taxon>
        <taxon>Chordata</taxon>
        <taxon>Craniata</taxon>
        <taxon>Vertebrata</taxon>
        <taxon>Euteleostomi</taxon>
        <taxon>Mammalia</taxon>
        <taxon>Eutheria</taxon>
        <taxon>Euarchontoglires</taxon>
        <taxon>Glires</taxon>
        <taxon>Rodentia</taxon>
        <taxon>Myomorpha</taxon>
        <taxon>Muroidea</taxon>
        <taxon>Muridae</taxon>
        <taxon>Murinae</taxon>
        <taxon>Mus</taxon>
        <taxon>Mus</taxon>
    </lineage>
</organism>
<keyword id="KW-0002">3D-structure</keyword>
<keyword id="KW-0227">DNA damage</keyword>
<keyword id="KW-0233">DNA recombination</keyword>
<keyword id="KW-0234">DNA repair</keyword>
<keyword id="KW-0239">DNA-directed DNA polymerase</keyword>
<keyword id="KW-0460">Magnesium</keyword>
<keyword id="KW-0479">Metal-binding</keyword>
<keyword id="KW-0548">Nucleotidyltransferase</keyword>
<keyword id="KW-0539">Nucleus</keyword>
<keyword id="KW-0597">Phosphoprotein</keyword>
<keyword id="KW-1185">Reference proteome</keyword>
<keyword id="KW-0808">Transferase</keyword>
<dbReference type="EC" id="2.7.7.7"/>
<dbReference type="EMBL" id="AF176098">
    <property type="protein sequence ID" value="AAF27552.1"/>
    <property type="molecule type" value="mRNA"/>
</dbReference>
<dbReference type="EMBL" id="AJ251804">
    <property type="protein sequence ID" value="CAB71154.1"/>
    <property type="molecule type" value="mRNA"/>
</dbReference>
<dbReference type="EMBL" id="AL627069">
    <property type="status" value="NOT_ANNOTATED_CDS"/>
    <property type="molecule type" value="Genomic_DNA"/>
</dbReference>
<dbReference type="EMBL" id="CH466574">
    <property type="protein sequence ID" value="EDL40561.1"/>
    <property type="molecule type" value="Genomic_DNA"/>
</dbReference>
<dbReference type="CCDS" id="CCDS24405.1"/>
<dbReference type="RefSeq" id="NP_059097.2">
    <property type="nucleotide sequence ID" value="NM_017401.2"/>
</dbReference>
<dbReference type="PDB" id="2IHM">
    <property type="method" value="X-ray"/>
    <property type="resolution" value="2.40 A"/>
    <property type="chains" value="A/B=137-496"/>
</dbReference>
<dbReference type="PDB" id="6GO3">
    <property type="method" value="X-ray"/>
    <property type="resolution" value="2.20 A"/>
    <property type="chains" value="A=363-394"/>
</dbReference>
<dbReference type="PDB" id="6GO4">
    <property type="method" value="X-ray"/>
    <property type="resolution" value="1.96 A"/>
    <property type="chains" value="A=363-394"/>
</dbReference>
<dbReference type="PDB" id="6GO5">
    <property type="method" value="X-ray"/>
    <property type="resolution" value="2.35 A"/>
    <property type="chains" value="A/B=363-394"/>
</dbReference>
<dbReference type="PDB" id="6GO6">
    <property type="method" value="X-ray"/>
    <property type="resolution" value="2.09 A"/>
    <property type="chains" value="A=363-394"/>
</dbReference>
<dbReference type="PDB" id="6GO7">
    <property type="method" value="X-ray"/>
    <property type="resolution" value="2.55 A"/>
    <property type="chains" value="A=363-394"/>
</dbReference>
<dbReference type="PDBsum" id="2IHM"/>
<dbReference type="PDBsum" id="6GO3"/>
<dbReference type="PDBsum" id="6GO4"/>
<dbReference type="PDBsum" id="6GO5"/>
<dbReference type="PDBsum" id="6GO6"/>
<dbReference type="PDBsum" id="6GO7"/>
<dbReference type="SMR" id="Q9JIW4"/>
<dbReference type="FunCoup" id="Q9JIW4">
    <property type="interactions" value="769"/>
</dbReference>
<dbReference type="STRING" id="10090.ENSMUSP00000020767"/>
<dbReference type="iPTMnet" id="Q9JIW4"/>
<dbReference type="PhosphoSitePlus" id="Q9JIW4"/>
<dbReference type="PaxDb" id="10090-ENSMUSP00000105463"/>
<dbReference type="ProteomicsDB" id="277596"/>
<dbReference type="Antibodypedia" id="13228">
    <property type="antibodies" value="142 antibodies from 30 providers"/>
</dbReference>
<dbReference type="DNASU" id="54125"/>
<dbReference type="Ensembl" id="ENSMUST00000020767.4">
    <property type="protein sequence ID" value="ENSMUSP00000020767.4"/>
    <property type="gene ID" value="ENSMUSG00000020474.12"/>
</dbReference>
<dbReference type="GeneID" id="54125"/>
<dbReference type="KEGG" id="mmu:54125"/>
<dbReference type="UCSC" id="uc007hxf.2">
    <property type="organism name" value="mouse"/>
</dbReference>
<dbReference type="AGR" id="MGI:1860191"/>
<dbReference type="CTD" id="27434"/>
<dbReference type="MGI" id="MGI:1860191">
    <property type="gene designation" value="Polm"/>
</dbReference>
<dbReference type="VEuPathDB" id="HostDB:ENSMUSG00000020474"/>
<dbReference type="eggNOG" id="KOG2534">
    <property type="taxonomic scope" value="Eukaryota"/>
</dbReference>
<dbReference type="GeneTree" id="ENSGT00940000158490"/>
<dbReference type="HOGENOM" id="CLU_008698_0_1_1"/>
<dbReference type="InParanoid" id="Q9JIW4"/>
<dbReference type="OMA" id="GKPCGHD"/>
<dbReference type="OrthoDB" id="77401at9989"/>
<dbReference type="Reactome" id="R-MMU-5693571">
    <property type="pathway name" value="Nonhomologous End-Joining (NHEJ)"/>
</dbReference>
<dbReference type="BioGRID-ORCS" id="54125">
    <property type="hits" value="1 hit in 112 CRISPR screens"/>
</dbReference>
<dbReference type="ChiTaRS" id="Polm">
    <property type="organism name" value="mouse"/>
</dbReference>
<dbReference type="EvolutionaryTrace" id="Q9JIW4"/>
<dbReference type="PRO" id="PR:Q9JIW4"/>
<dbReference type="Proteomes" id="UP000000589">
    <property type="component" value="Chromosome 11"/>
</dbReference>
<dbReference type="RNAct" id="Q9JIW4">
    <property type="molecule type" value="protein"/>
</dbReference>
<dbReference type="Bgee" id="ENSMUSG00000020474">
    <property type="expression patterns" value="Expressed in animal zygote and 141 other cell types or tissues"/>
</dbReference>
<dbReference type="ExpressionAtlas" id="Q9JIW4">
    <property type="expression patterns" value="baseline and differential"/>
</dbReference>
<dbReference type="GO" id="GO:0005634">
    <property type="term" value="C:nucleus"/>
    <property type="evidence" value="ECO:0007669"/>
    <property type="project" value="UniProtKB-SubCell"/>
</dbReference>
<dbReference type="GO" id="GO:0003677">
    <property type="term" value="F:DNA binding"/>
    <property type="evidence" value="ECO:0007669"/>
    <property type="project" value="InterPro"/>
</dbReference>
<dbReference type="GO" id="GO:0003887">
    <property type="term" value="F:DNA-directed DNA polymerase activity"/>
    <property type="evidence" value="ECO:0007669"/>
    <property type="project" value="UniProtKB-KW"/>
</dbReference>
<dbReference type="GO" id="GO:0046872">
    <property type="term" value="F:metal ion binding"/>
    <property type="evidence" value="ECO:0007669"/>
    <property type="project" value="UniProtKB-KW"/>
</dbReference>
<dbReference type="GO" id="GO:0030183">
    <property type="term" value="P:B cell differentiation"/>
    <property type="evidence" value="ECO:0000315"/>
    <property type="project" value="MGI"/>
</dbReference>
<dbReference type="GO" id="GO:0006310">
    <property type="term" value="P:DNA recombination"/>
    <property type="evidence" value="ECO:0007669"/>
    <property type="project" value="UniProtKB-KW"/>
</dbReference>
<dbReference type="GO" id="GO:0006281">
    <property type="term" value="P:DNA repair"/>
    <property type="evidence" value="ECO:0007669"/>
    <property type="project" value="UniProtKB-KW"/>
</dbReference>
<dbReference type="GO" id="GO:0016446">
    <property type="term" value="P:somatic hypermutation of immunoglobulin genes"/>
    <property type="evidence" value="ECO:0000315"/>
    <property type="project" value="MGI"/>
</dbReference>
<dbReference type="CDD" id="cd00141">
    <property type="entry name" value="NT_POLXc"/>
    <property type="match status" value="1"/>
</dbReference>
<dbReference type="FunFam" id="1.10.150.20:FF:000010">
    <property type="entry name" value="DNA polymerase lambda"/>
    <property type="match status" value="1"/>
</dbReference>
<dbReference type="FunFam" id="1.10.150.110:FF:000003">
    <property type="entry name" value="DNA polymerase mu"/>
    <property type="match status" value="1"/>
</dbReference>
<dbReference type="FunFam" id="3.30.210.10:FF:000004">
    <property type="entry name" value="DNA-directed DNA/RNA polymerase mu"/>
    <property type="match status" value="1"/>
</dbReference>
<dbReference type="FunFam" id="3.30.460.10:FF:000032">
    <property type="entry name" value="DNA-directed DNA/RNA polymerase mu"/>
    <property type="match status" value="1"/>
</dbReference>
<dbReference type="FunFam" id="3.40.50.10190:FF:000035">
    <property type="entry name" value="DNA-directed DNA/RNA polymerase mu"/>
    <property type="match status" value="1"/>
</dbReference>
<dbReference type="Gene3D" id="1.10.150.20">
    <property type="entry name" value="5' to 3' exonuclease, C-terminal subdomain"/>
    <property type="match status" value="1"/>
</dbReference>
<dbReference type="Gene3D" id="3.30.460.10">
    <property type="entry name" value="Beta Polymerase, domain 2"/>
    <property type="match status" value="1"/>
</dbReference>
<dbReference type="Gene3D" id="3.40.50.10190">
    <property type="entry name" value="BRCT domain"/>
    <property type="match status" value="1"/>
</dbReference>
<dbReference type="Gene3D" id="1.10.150.110">
    <property type="entry name" value="DNA polymerase beta, N-terminal domain-like"/>
    <property type="match status" value="1"/>
</dbReference>
<dbReference type="Gene3D" id="3.30.210.10">
    <property type="entry name" value="DNA polymerase, thumb domain"/>
    <property type="match status" value="1"/>
</dbReference>
<dbReference type="InterPro" id="IPR001357">
    <property type="entry name" value="BRCT_dom"/>
</dbReference>
<dbReference type="InterPro" id="IPR036420">
    <property type="entry name" value="BRCT_dom_sf"/>
</dbReference>
<dbReference type="InterPro" id="IPR002054">
    <property type="entry name" value="DNA-dir_DNA_pol_X"/>
</dbReference>
<dbReference type="InterPro" id="IPR027249">
    <property type="entry name" value="DNA/RNApol_mu"/>
</dbReference>
<dbReference type="InterPro" id="IPR019843">
    <property type="entry name" value="DNA_pol-X_BS"/>
</dbReference>
<dbReference type="InterPro" id="IPR010996">
    <property type="entry name" value="DNA_pol_b-like_N"/>
</dbReference>
<dbReference type="InterPro" id="IPR028207">
    <property type="entry name" value="DNA_pol_B_palm_palm"/>
</dbReference>
<dbReference type="InterPro" id="IPR018944">
    <property type="entry name" value="DNA_pol_lambd_fingers_domain"/>
</dbReference>
<dbReference type="InterPro" id="IPR027421">
    <property type="entry name" value="DNA_pol_lamdba_lyase_dom_sf"/>
</dbReference>
<dbReference type="InterPro" id="IPR037160">
    <property type="entry name" value="DNA_Pol_thumb_sf"/>
</dbReference>
<dbReference type="InterPro" id="IPR022312">
    <property type="entry name" value="DNA_pol_X"/>
</dbReference>
<dbReference type="InterPro" id="IPR043519">
    <property type="entry name" value="NT_sf"/>
</dbReference>
<dbReference type="InterPro" id="IPR029398">
    <property type="entry name" value="PolB_thumb"/>
</dbReference>
<dbReference type="InterPro" id="IPR001726">
    <property type="entry name" value="TdT/Mu"/>
</dbReference>
<dbReference type="PANTHER" id="PTHR11276">
    <property type="entry name" value="DNA POLYMERASE TYPE-X FAMILY MEMBER"/>
    <property type="match status" value="1"/>
</dbReference>
<dbReference type="PANTHER" id="PTHR11276:SF24">
    <property type="entry name" value="DNA-DIRECTED DNA_RNA POLYMERASE MU"/>
    <property type="match status" value="1"/>
</dbReference>
<dbReference type="Pfam" id="PF14792">
    <property type="entry name" value="DNA_pol_B_palm"/>
    <property type="match status" value="1"/>
</dbReference>
<dbReference type="Pfam" id="PF14791">
    <property type="entry name" value="DNA_pol_B_thumb"/>
    <property type="match status" value="1"/>
</dbReference>
<dbReference type="Pfam" id="PF10391">
    <property type="entry name" value="DNA_pol_lambd_f"/>
    <property type="match status" value="1"/>
</dbReference>
<dbReference type="Pfam" id="PF14716">
    <property type="entry name" value="HHH_8"/>
    <property type="match status" value="1"/>
</dbReference>
<dbReference type="PIRSF" id="PIRSF000817">
    <property type="entry name" value="DNA_NT"/>
    <property type="match status" value="1"/>
</dbReference>
<dbReference type="PIRSF" id="PIRSF501176">
    <property type="entry name" value="DNApol_mu"/>
    <property type="match status" value="1"/>
</dbReference>
<dbReference type="PRINTS" id="PR00869">
    <property type="entry name" value="DNAPOLX"/>
</dbReference>
<dbReference type="PRINTS" id="PR00871">
    <property type="entry name" value="DNAPOLXTDT"/>
</dbReference>
<dbReference type="SMART" id="SM00483">
    <property type="entry name" value="POLXc"/>
    <property type="match status" value="1"/>
</dbReference>
<dbReference type="SUPFAM" id="SSF52113">
    <property type="entry name" value="BRCT domain"/>
    <property type="match status" value="1"/>
</dbReference>
<dbReference type="SUPFAM" id="SSF47802">
    <property type="entry name" value="DNA polymerase beta, N-terminal domain-like"/>
    <property type="match status" value="1"/>
</dbReference>
<dbReference type="SUPFAM" id="SSF81301">
    <property type="entry name" value="Nucleotidyltransferase"/>
    <property type="match status" value="1"/>
</dbReference>
<dbReference type="SUPFAM" id="SSF81585">
    <property type="entry name" value="PsbU/PolX domain-like"/>
    <property type="match status" value="1"/>
</dbReference>
<dbReference type="PROSITE" id="PS50172">
    <property type="entry name" value="BRCT"/>
    <property type="match status" value="1"/>
</dbReference>
<dbReference type="PROSITE" id="PS00522">
    <property type="entry name" value="DNA_POLYMERASE_X"/>
    <property type="match status" value="1"/>
</dbReference>
<gene>
    <name type="primary">Polm</name>
    <name type="synonym">polmu</name>
</gene>
<name>DPOLM_MOUSE</name>
<sequence length="496" mass="55490">MLPKRRRVRAGSPHSAVASSTPPSVVRFPDVAIYLAEPRMGRSRRAFLTRLARSKGFRVLDAYSSKVTHVVMEGTSAKEAICWQKNMDALPTGCPQPALLDISWFTESMAAGQPVPEEGRHHLEVAEPRKEPPVSASMPAYACQRPSPLTHHNTLLSEALETLAEAAGFEANEGRLLSFSRAASVLKSLPCPVASLSQLHGLPYFGEHSTRVIQELLEHGTCEEVKQVRCSERYQTMKLFTQVFGVGVKTANRWYQEGLRTLDELREQPQRLTQQQKAGLQYYQDLSTPVRRADAEALQQLIEAAVRQTLPGATVTLTGGFRRGKLQGHDVDFLITHPEEGQEVGLLPKVMSCLQSQGLVLYHQYHRSHLADSAHNLRQRSSTMDAFERSFCILGLPQPQQAALAGALPPCPTWKAVRVDLVVTPSSQFPFALLGWTGSQFFERELRRFSRQEKGLWLNSHGLFDPEQKRVFHATSEEDVFRLLGLKYLPPEQRNA</sequence>
<feature type="chain" id="PRO_0000218788" description="DNA-directed DNA/RNA polymerase mu">
    <location>
        <begin position="1"/>
        <end position="496"/>
    </location>
</feature>
<feature type="domain" description="BRCT" evidence="2">
    <location>
        <begin position="23"/>
        <end position="122"/>
    </location>
</feature>
<feature type="region of interest" description="Disordered" evidence="3">
    <location>
        <begin position="1"/>
        <end position="22"/>
    </location>
</feature>
<feature type="region of interest" description="Involved in ssDNA binding">
    <location>
        <begin position="323"/>
        <end position="332"/>
    </location>
</feature>
<feature type="compositionally biased region" description="Low complexity" evidence="3">
    <location>
        <begin position="12"/>
        <end position="22"/>
    </location>
</feature>
<feature type="binding site" evidence="1">
    <location>
        <position position="241"/>
    </location>
    <ligand>
        <name>Na(+)</name>
        <dbReference type="ChEBI" id="CHEBI:29101"/>
    </ligand>
</feature>
<feature type="binding site" evidence="1">
    <location>
        <position position="243"/>
    </location>
    <ligand>
        <name>Na(+)</name>
        <dbReference type="ChEBI" id="CHEBI:29101"/>
    </ligand>
</feature>
<feature type="binding site">
    <location>
        <position position="330"/>
    </location>
    <ligand>
        <name>Mg(2+)</name>
        <dbReference type="ChEBI" id="CHEBI:18420"/>
    </ligand>
</feature>
<feature type="binding site">
    <location>
        <position position="332"/>
    </location>
    <ligand>
        <name>Mg(2+)</name>
        <dbReference type="ChEBI" id="CHEBI:18420"/>
    </ligand>
</feature>
<feature type="binding site" evidence="1">
    <location>
        <position position="420"/>
    </location>
    <ligand>
        <name>Mg(2+)</name>
        <dbReference type="ChEBI" id="CHEBI:18420"/>
    </ligand>
</feature>
<feature type="site" description="Responsible for the low discrimination between dNTP and rNTP" evidence="1">
    <location>
        <position position="435"/>
    </location>
</feature>
<feature type="modified residue" description="Phosphoserine" evidence="8">
    <location>
        <position position="12"/>
    </location>
</feature>
<feature type="sequence conflict" description="In Ref. 1; AAF27552." evidence="7" ref="1">
    <original>A</original>
    <variation>D</variation>
    <location>
        <position position="18"/>
    </location>
</feature>
<feature type="sequence conflict" description="In Ref. 2; CAB71154." evidence="7" ref="2">
    <original>A</original>
    <variation>V</variation>
    <location>
        <position position="386"/>
    </location>
</feature>
<feature type="helix" evidence="9">
    <location>
        <begin position="142"/>
        <end position="144"/>
    </location>
</feature>
<feature type="helix" evidence="9">
    <location>
        <begin position="154"/>
        <end position="169"/>
    </location>
</feature>
<feature type="helix" evidence="9">
    <location>
        <begin position="173"/>
        <end position="188"/>
    </location>
</feature>
<feature type="helix" evidence="9">
    <location>
        <begin position="196"/>
        <end position="199"/>
    </location>
</feature>
<feature type="helix" evidence="9">
    <location>
        <begin position="207"/>
        <end position="219"/>
    </location>
</feature>
<feature type="helix" evidence="9">
    <location>
        <begin position="223"/>
        <end position="230"/>
    </location>
</feature>
<feature type="helix" evidence="9">
    <location>
        <begin position="232"/>
        <end position="241"/>
    </location>
</feature>
<feature type="helix" evidence="9">
    <location>
        <begin position="248"/>
        <end position="256"/>
    </location>
</feature>
<feature type="helix" evidence="9">
    <location>
        <begin position="262"/>
        <end position="266"/>
    </location>
</feature>
<feature type="helix" evidence="9">
    <location>
        <begin position="274"/>
        <end position="281"/>
    </location>
</feature>
<feature type="helix" evidence="9">
    <location>
        <begin position="283"/>
        <end position="287"/>
    </location>
</feature>
<feature type="helix" evidence="9">
    <location>
        <begin position="292"/>
        <end position="307"/>
    </location>
</feature>
<feature type="strand" evidence="9">
    <location>
        <begin position="314"/>
        <end position="317"/>
    </location>
</feature>
<feature type="helix" evidence="9">
    <location>
        <begin position="319"/>
        <end position="322"/>
    </location>
</feature>
<feature type="strand" evidence="9">
    <location>
        <begin position="326"/>
        <end position="336"/>
    </location>
</feature>
<feature type="turn" evidence="9">
    <location>
        <begin position="340"/>
        <end position="345"/>
    </location>
</feature>
<feature type="helix" evidence="9">
    <location>
        <begin position="346"/>
        <end position="356"/>
    </location>
</feature>
<feature type="strand" evidence="10">
    <location>
        <begin position="363"/>
        <end position="366"/>
    </location>
</feature>
<feature type="helix" evidence="10">
    <location>
        <begin position="370"/>
        <end position="376"/>
    </location>
</feature>
<feature type="helix" evidence="11">
    <location>
        <begin position="381"/>
        <end position="385"/>
    </location>
</feature>
<feature type="strand" evidence="10">
    <location>
        <begin position="387"/>
        <end position="394"/>
    </location>
</feature>
<feature type="strand" evidence="9">
    <location>
        <begin position="414"/>
        <end position="423"/>
    </location>
</feature>
<feature type="helix" evidence="9">
    <location>
        <begin position="429"/>
        <end position="437"/>
    </location>
</feature>
<feature type="helix" evidence="9">
    <location>
        <begin position="440"/>
        <end position="454"/>
    </location>
</feature>
<feature type="helix" evidence="9">
    <location>
        <begin position="477"/>
        <end position="483"/>
    </location>
</feature>
<feature type="helix" evidence="9">
    <location>
        <begin position="491"/>
        <end position="493"/>
    </location>
</feature>
<protein>
    <recommendedName>
        <fullName>DNA-directed DNA/RNA polymerase mu</fullName>
        <shortName>Pol Mu</shortName>
        <ecNumber>2.7.7.7</ecNumber>
    </recommendedName>
    <alternativeName>
        <fullName>Terminal transferase</fullName>
    </alternativeName>
</protein>
<evidence type="ECO:0000250" key="1"/>
<evidence type="ECO:0000255" key="2">
    <source>
        <dbReference type="PROSITE-ProRule" id="PRU00033"/>
    </source>
</evidence>
<evidence type="ECO:0000256" key="3">
    <source>
        <dbReference type="SAM" id="MobiDB-lite"/>
    </source>
</evidence>
<evidence type="ECO:0000269" key="4">
    <source>
    </source>
</evidence>
<evidence type="ECO:0000269" key="5">
    <source>
    </source>
</evidence>
<evidence type="ECO:0000269" key="6">
    <source>
    </source>
</evidence>
<evidence type="ECO:0000305" key="7"/>
<evidence type="ECO:0007744" key="8">
    <source>
    </source>
</evidence>
<evidence type="ECO:0007829" key="9">
    <source>
        <dbReference type="PDB" id="2IHM"/>
    </source>
</evidence>
<evidence type="ECO:0007829" key="10">
    <source>
        <dbReference type="PDB" id="6GO4"/>
    </source>
</evidence>
<evidence type="ECO:0007829" key="11">
    <source>
        <dbReference type="PDB" id="6GO6"/>
    </source>
</evidence>
<accession>Q9JIW4</accession>
<accession>G5E840</accession>
<accession>Q9JJW9</accession>
<proteinExistence type="evidence at protein level"/>
<comment type="function">
    <text evidence="4 6">Gap-filling polymerase involved in repair of DNA double-strand breaks by non-homologous end joining (NHEJ). Participates in immunoglobulin (Ig) light chain gene rearrangement in V(D)J recombination.</text>
</comment>
<comment type="catalytic activity">
    <reaction>
        <text>DNA(n) + a 2'-deoxyribonucleoside 5'-triphosphate = DNA(n+1) + diphosphate</text>
        <dbReference type="Rhea" id="RHEA:22508"/>
        <dbReference type="Rhea" id="RHEA-COMP:17339"/>
        <dbReference type="Rhea" id="RHEA-COMP:17340"/>
        <dbReference type="ChEBI" id="CHEBI:33019"/>
        <dbReference type="ChEBI" id="CHEBI:61560"/>
        <dbReference type="ChEBI" id="CHEBI:173112"/>
        <dbReference type="EC" id="2.7.7.7"/>
    </reaction>
</comment>
<comment type="cofactor">
    <cofactor evidence="5">
        <name>Mg(2+)</name>
        <dbReference type="ChEBI" id="CHEBI:18420"/>
    </cofactor>
</comment>
<comment type="subcellular location">
    <subcellularLocation>
        <location evidence="1">Nucleus</location>
    </subcellularLocation>
</comment>
<comment type="miscellaneous">
    <text evidence="1">DPOLM has a reduced ability to distinguish dNTP and rNTP as substrates, and elongates them on DNA primer strand with a similar efficiency. It is able to polymerize nucleotides on RNA primer strands (By similarity).</text>
</comment>
<comment type="similarity">
    <text evidence="7">Belongs to the DNA polymerase type-X family.</text>
</comment>